<sequence length="33" mass="3309">GIMSIVKDVAKTAAKEAAKGALSTLSCKLAKTC</sequence>
<keyword id="KW-0878">Amphibian defense peptide</keyword>
<keyword id="KW-0044">Antibiotic</keyword>
<keyword id="KW-0929">Antimicrobial</keyword>
<keyword id="KW-0903">Direct protein sequencing</keyword>
<keyword id="KW-1015">Disulfide bond</keyword>
<keyword id="KW-0964">Secreted</keyword>
<name>GGN3_GLARU</name>
<proteinExistence type="evidence at protein level"/>
<protein>
    <recommendedName>
        <fullName>Gaegurin-3</fullName>
    </recommendedName>
</protein>
<dbReference type="PIR" id="PC2302">
    <property type="entry name" value="PC2302"/>
</dbReference>
<dbReference type="SMR" id="P80397"/>
<dbReference type="GO" id="GO:0005576">
    <property type="term" value="C:extracellular region"/>
    <property type="evidence" value="ECO:0007669"/>
    <property type="project" value="UniProtKB-SubCell"/>
</dbReference>
<dbReference type="GO" id="GO:0042742">
    <property type="term" value="P:defense response to bacterium"/>
    <property type="evidence" value="ECO:0007669"/>
    <property type="project" value="UniProtKB-KW"/>
</dbReference>
<dbReference type="InterPro" id="IPR012521">
    <property type="entry name" value="Antimicrobial_frog_2"/>
</dbReference>
<dbReference type="Pfam" id="PF08023">
    <property type="entry name" value="Antimicrobial_2"/>
    <property type="match status" value="1"/>
</dbReference>
<feature type="peptide" id="PRO_0000044654" description="Gaegurin-3">
    <location>
        <begin position="1"/>
        <end position="33"/>
    </location>
</feature>
<feature type="disulfide bond" evidence="1">
    <location>
        <begin position="27"/>
        <end position="33"/>
    </location>
</feature>
<evidence type="ECO:0000250" key="1"/>
<evidence type="ECO:0000305" key="2"/>
<reference key="1">
    <citation type="journal article" date="1994" name="Biochem. Biophys. Res. Commun.">
        <title>Antimicrobial peptides from the skin of a Korean frog, Rana rugosa.</title>
        <authorList>
            <person name="Park J.M."/>
            <person name="Jung J.-E."/>
            <person name="Lee B.J."/>
        </authorList>
    </citation>
    <scope>PROTEIN SEQUENCE</scope>
    <source>
        <tissue>Skin secretion</tissue>
    </source>
</reference>
<comment type="function">
    <text>Has a non-hemolytic activity. Has a broad spectrum of activity against both Gram-positive and Gram-negative bacteria, fungi and protozoa.</text>
</comment>
<comment type="subunit">
    <text>Monomer.</text>
</comment>
<comment type="subcellular location">
    <subcellularLocation>
        <location>Secreted</location>
    </subcellularLocation>
</comment>
<comment type="tissue specificity">
    <text>Expressed by the skin glands.</text>
</comment>
<comment type="similarity">
    <text evidence="2">Belongs to the frog skin active peptide (FSAP) family. Brevinin subfamily.</text>
</comment>
<organism>
    <name type="scientific">Glandirana rugosa</name>
    <name type="common">Japanese wrinkled frog</name>
    <name type="synonym">Rana rugosa</name>
    <dbReference type="NCBI Taxonomy" id="8410"/>
    <lineage>
        <taxon>Eukaryota</taxon>
        <taxon>Metazoa</taxon>
        <taxon>Chordata</taxon>
        <taxon>Craniata</taxon>
        <taxon>Vertebrata</taxon>
        <taxon>Euteleostomi</taxon>
        <taxon>Amphibia</taxon>
        <taxon>Batrachia</taxon>
        <taxon>Anura</taxon>
        <taxon>Neobatrachia</taxon>
        <taxon>Ranoidea</taxon>
        <taxon>Ranidae</taxon>
        <taxon>Glandirana</taxon>
    </lineage>
</organism>
<accession>P80397</accession>
<gene>
    <name type="primary">GGN3</name>
</gene>